<gene>
    <name evidence="1" type="primary">pdxB</name>
    <name type="ordered locus">PFLU_1546</name>
</gene>
<dbReference type="EC" id="1.1.1.290" evidence="1"/>
<dbReference type="EMBL" id="AM181176">
    <property type="protein sequence ID" value="CAY47795.1"/>
    <property type="molecule type" value="Genomic_DNA"/>
</dbReference>
<dbReference type="RefSeq" id="WP_012722837.1">
    <property type="nucleotide sequence ID" value="NC_012660.1"/>
</dbReference>
<dbReference type="SMR" id="C3K5G7"/>
<dbReference type="STRING" id="294.SRM1_03797"/>
<dbReference type="eggNOG" id="COG0111">
    <property type="taxonomic scope" value="Bacteria"/>
</dbReference>
<dbReference type="HOGENOM" id="CLU_019796_4_0_6"/>
<dbReference type="OrthoDB" id="9770208at2"/>
<dbReference type="UniPathway" id="UPA00244">
    <property type="reaction ID" value="UER00310"/>
</dbReference>
<dbReference type="GO" id="GO:0005829">
    <property type="term" value="C:cytosol"/>
    <property type="evidence" value="ECO:0007669"/>
    <property type="project" value="TreeGrafter"/>
</dbReference>
<dbReference type="GO" id="GO:0033711">
    <property type="term" value="F:4-phosphoerythronate dehydrogenase activity"/>
    <property type="evidence" value="ECO:0007669"/>
    <property type="project" value="UniProtKB-EC"/>
</dbReference>
<dbReference type="GO" id="GO:0051287">
    <property type="term" value="F:NAD binding"/>
    <property type="evidence" value="ECO:0007669"/>
    <property type="project" value="InterPro"/>
</dbReference>
<dbReference type="GO" id="GO:0046983">
    <property type="term" value="F:protein dimerization activity"/>
    <property type="evidence" value="ECO:0007669"/>
    <property type="project" value="InterPro"/>
</dbReference>
<dbReference type="GO" id="GO:0036001">
    <property type="term" value="P:'de novo' pyridoxal 5'-phosphate biosynthetic process"/>
    <property type="evidence" value="ECO:0007669"/>
    <property type="project" value="TreeGrafter"/>
</dbReference>
<dbReference type="GO" id="GO:0008615">
    <property type="term" value="P:pyridoxine biosynthetic process"/>
    <property type="evidence" value="ECO:0007669"/>
    <property type="project" value="UniProtKB-UniRule"/>
</dbReference>
<dbReference type="CDD" id="cd12158">
    <property type="entry name" value="ErythrP_dh"/>
    <property type="match status" value="1"/>
</dbReference>
<dbReference type="Gene3D" id="3.30.1370.170">
    <property type="match status" value="1"/>
</dbReference>
<dbReference type="Gene3D" id="3.40.50.720">
    <property type="entry name" value="NAD(P)-binding Rossmann-like Domain"/>
    <property type="match status" value="2"/>
</dbReference>
<dbReference type="HAMAP" id="MF_01825">
    <property type="entry name" value="PdxB"/>
    <property type="match status" value="1"/>
</dbReference>
<dbReference type="InterPro" id="IPR006139">
    <property type="entry name" value="D-isomer_2_OHA_DH_cat_dom"/>
</dbReference>
<dbReference type="InterPro" id="IPR029753">
    <property type="entry name" value="D-isomer_DH_CS"/>
</dbReference>
<dbReference type="InterPro" id="IPR006140">
    <property type="entry name" value="D-isomer_DH_NAD-bd"/>
</dbReference>
<dbReference type="InterPro" id="IPR020921">
    <property type="entry name" value="Erythronate-4-P_DHase"/>
</dbReference>
<dbReference type="InterPro" id="IPR024531">
    <property type="entry name" value="Erythronate-4-P_DHase_dimer"/>
</dbReference>
<dbReference type="InterPro" id="IPR036291">
    <property type="entry name" value="NAD(P)-bd_dom_sf"/>
</dbReference>
<dbReference type="InterPro" id="IPR038251">
    <property type="entry name" value="PdxB_dimer_sf"/>
</dbReference>
<dbReference type="NCBIfam" id="NF001309">
    <property type="entry name" value="PRK00257.1"/>
    <property type="match status" value="1"/>
</dbReference>
<dbReference type="PANTHER" id="PTHR42938">
    <property type="entry name" value="FORMATE DEHYDROGENASE 1"/>
    <property type="match status" value="1"/>
</dbReference>
<dbReference type="PANTHER" id="PTHR42938:SF9">
    <property type="entry name" value="FORMATE DEHYDROGENASE 1"/>
    <property type="match status" value="1"/>
</dbReference>
<dbReference type="Pfam" id="PF00389">
    <property type="entry name" value="2-Hacid_dh"/>
    <property type="match status" value="1"/>
</dbReference>
<dbReference type="Pfam" id="PF02826">
    <property type="entry name" value="2-Hacid_dh_C"/>
    <property type="match status" value="1"/>
</dbReference>
<dbReference type="Pfam" id="PF11890">
    <property type="entry name" value="DUF3410"/>
    <property type="match status" value="1"/>
</dbReference>
<dbReference type="SUPFAM" id="SSF52283">
    <property type="entry name" value="Formate/glycerate dehydrogenase catalytic domain-like"/>
    <property type="match status" value="1"/>
</dbReference>
<dbReference type="SUPFAM" id="SSF51735">
    <property type="entry name" value="NAD(P)-binding Rossmann-fold domains"/>
    <property type="match status" value="1"/>
</dbReference>
<dbReference type="PROSITE" id="PS00671">
    <property type="entry name" value="D_2_HYDROXYACID_DH_3"/>
    <property type="match status" value="1"/>
</dbReference>
<name>PDXB_PSEFS</name>
<sequence>MLIVADENIPLLDAFFQGFGEIRRVPGRSLDRATVEQADVLLVRSVTNVNRALLEGSKVRFVGTCTIGTDHLDLDYFKQAGIQWSSAPGCNARGVVDYVLGSLQTLAEIEGADLNQRTYGVVGAGEVGGRLVKVLKGLGWNVLVCDPPRQIAEDGDYVSLAQIIEQCDVISLHTPLTKSGNGSTWHLFDRQRLEQLKPGTWLINASRGPVVDNAALREVLLAREDLQAVLDVWEGEPEVDVDLADLCVLATPHIAGYSLEGRQRGTAQIYQAFCAHLGQAPSILLSDLLPPPWLAEVHLNASTDPAWALATLCRSVYDPRRDDADFRRSLVGTVEEQRKAFDLLRKHYPARREIEGLKVRINGESTALASIVSALGAQAI</sequence>
<comment type="function">
    <text evidence="1">Catalyzes the oxidation of erythronate-4-phosphate to 3-hydroxy-2-oxo-4-phosphonooxybutanoate.</text>
</comment>
<comment type="catalytic activity">
    <reaction evidence="1">
        <text>4-phospho-D-erythronate + NAD(+) = (R)-3-hydroxy-2-oxo-4-phosphooxybutanoate + NADH + H(+)</text>
        <dbReference type="Rhea" id="RHEA:18829"/>
        <dbReference type="ChEBI" id="CHEBI:15378"/>
        <dbReference type="ChEBI" id="CHEBI:57540"/>
        <dbReference type="ChEBI" id="CHEBI:57945"/>
        <dbReference type="ChEBI" id="CHEBI:58538"/>
        <dbReference type="ChEBI" id="CHEBI:58766"/>
        <dbReference type="EC" id="1.1.1.290"/>
    </reaction>
</comment>
<comment type="pathway">
    <text evidence="1">Cofactor biosynthesis; pyridoxine 5'-phosphate biosynthesis; pyridoxine 5'-phosphate from D-erythrose 4-phosphate: step 2/5.</text>
</comment>
<comment type="subunit">
    <text evidence="1">Homodimer.</text>
</comment>
<comment type="subcellular location">
    <subcellularLocation>
        <location evidence="1">Cytoplasm</location>
    </subcellularLocation>
</comment>
<comment type="similarity">
    <text evidence="1">Belongs to the D-isomer specific 2-hydroxyacid dehydrogenase family. PdxB subfamily.</text>
</comment>
<feature type="chain" id="PRO_1000216072" description="Erythronate-4-phosphate dehydrogenase">
    <location>
        <begin position="1"/>
        <end position="380"/>
    </location>
</feature>
<feature type="active site" evidence="1">
    <location>
        <position position="207"/>
    </location>
</feature>
<feature type="active site" evidence="1">
    <location>
        <position position="236"/>
    </location>
</feature>
<feature type="active site" description="Proton donor" evidence="1">
    <location>
        <position position="253"/>
    </location>
</feature>
<feature type="binding site" evidence="1">
    <location>
        <position position="45"/>
    </location>
    <ligand>
        <name>substrate</name>
    </ligand>
</feature>
<feature type="binding site" evidence="1">
    <location>
        <position position="66"/>
    </location>
    <ligand>
        <name>substrate</name>
    </ligand>
</feature>
<feature type="binding site" evidence="1">
    <location>
        <position position="146"/>
    </location>
    <ligand>
        <name>NAD(+)</name>
        <dbReference type="ChEBI" id="CHEBI:57540"/>
    </ligand>
</feature>
<feature type="binding site" evidence="1">
    <location>
        <position position="174"/>
    </location>
    <ligand>
        <name>NAD(+)</name>
        <dbReference type="ChEBI" id="CHEBI:57540"/>
    </ligand>
</feature>
<feature type="binding site" evidence="1">
    <location>
        <begin position="205"/>
        <end position="207"/>
    </location>
    <ligand>
        <name>NAD(+)</name>
        <dbReference type="ChEBI" id="CHEBI:57540"/>
    </ligand>
</feature>
<feature type="binding site" evidence="1">
    <location>
        <position position="231"/>
    </location>
    <ligand>
        <name>NAD(+)</name>
        <dbReference type="ChEBI" id="CHEBI:57540"/>
    </ligand>
</feature>
<feature type="binding site" evidence="1">
    <location>
        <position position="256"/>
    </location>
    <ligand>
        <name>NAD(+)</name>
        <dbReference type="ChEBI" id="CHEBI:57540"/>
    </ligand>
</feature>
<feature type="binding site" evidence="1">
    <location>
        <position position="257"/>
    </location>
    <ligand>
        <name>substrate</name>
    </ligand>
</feature>
<keyword id="KW-0963">Cytoplasm</keyword>
<keyword id="KW-0520">NAD</keyword>
<keyword id="KW-0560">Oxidoreductase</keyword>
<keyword id="KW-0664">Pyridoxine biosynthesis</keyword>
<accession>C3K5G7</accession>
<protein>
    <recommendedName>
        <fullName evidence="1">Erythronate-4-phosphate dehydrogenase</fullName>
        <ecNumber evidence="1">1.1.1.290</ecNumber>
    </recommendedName>
</protein>
<organism>
    <name type="scientific">Pseudomonas fluorescens (strain SBW25)</name>
    <dbReference type="NCBI Taxonomy" id="216595"/>
    <lineage>
        <taxon>Bacteria</taxon>
        <taxon>Pseudomonadati</taxon>
        <taxon>Pseudomonadota</taxon>
        <taxon>Gammaproteobacteria</taxon>
        <taxon>Pseudomonadales</taxon>
        <taxon>Pseudomonadaceae</taxon>
        <taxon>Pseudomonas</taxon>
    </lineage>
</organism>
<evidence type="ECO:0000255" key="1">
    <source>
        <dbReference type="HAMAP-Rule" id="MF_01825"/>
    </source>
</evidence>
<proteinExistence type="inferred from homology"/>
<reference key="1">
    <citation type="journal article" date="2009" name="Genome Biol.">
        <title>Genomic and genetic analyses of diversity and plant interactions of Pseudomonas fluorescens.</title>
        <authorList>
            <person name="Silby M.W."/>
            <person name="Cerdeno-Tarraga A.M."/>
            <person name="Vernikos G.S."/>
            <person name="Giddens S.R."/>
            <person name="Jackson R.W."/>
            <person name="Preston G.M."/>
            <person name="Zhang X.-X."/>
            <person name="Moon C.D."/>
            <person name="Gehrig S.M."/>
            <person name="Godfrey S.A.C."/>
            <person name="Knight C.G."/>
            <person name="Malone J.G."/>
            <person name="Robinson Z."/>
            <person name="Spiers A.J."/>
            <person name="Harris S."/>
            <person name="Challis G.L."/>
            <person name="Yaxley A.M."/>
            <person name="Harris D."/>
            <person name="Seeger K."/>
            <person name="Murphy L."/>
            <person name="Rutter S."/>
            <person name="Squares R."/>
            <person name="Quail M.A."/>
            <person name="Saunders E."/>
            <person name="Mavromatis K."/>
            <person name="Brettin T.S."/>
            <person name="Bentley S.D."/>
            <person name="Hothersall J."/>
            <person name="Stephens E."/>
            <person name="Thomas C.M."/>
            <person name="Parkhill J."/>
            <person name="Levy S.B."/>
            <person name="Rainey P.B."/>
            <person name="Thomson N.R."/>
        </authorList>
    </citation>
    <scope>NUCLEOTIDE SEQUENCE [LARGE SCALE GENOMIC DNA]</scope>
    <source>
        <strain>SBW25</strain>
    </source>
</reference>